<organism>
    <name type="scientific">Arabidopsis thaliana</name>
    <name type="common">Mouse-ear cress</name>
    <dbReference type="NCBI Taxonomy" id="3702"/>
    <lineage>
        <taxon>Eukaryota</taxon>
        <taxon>Viridiplantae</taxon>
        <taxon>Streptophyta</taxon>
        <taxon>Embryophyta</taxon>
        <taxon>Tracheophyta</taxon>
        <taxon>Spermatophyta</taxon>
        <taxon>Magnoliopsida</taxon>
        <taxon>eudicotyledons</taxon>
        <taxon>Gunneridae</taxon>
        <taxon>Pentapetalae</taxon>
        <taxon>rosids</taxon>
        <taxon>malvids</taxon>
        <taxon>Brassicales</taxon>
        <taxon>Brassicaceae</taxon>
        <taxon>Camelineae</taxon>
        <taxon>Arabidopsis</taxon>
    </lineage>
</organism>
<keyword id="KW-0025">Alternative splicing</keyword>
<keyword id="KW-0539">Nucleus</keyword>
<keyword id="KW-0597">Phosphoprotein</keyword>
<keyword id="KW-1185">Reference proteome</keyword>
<keyword id="KW-0677">Repeat</keyword>
<keyword id="KW-0678">Repressor</keyword>
<keyword id="KW-0804">Transcription</keyword>
<keyword id="KW-0805">Transcription regulation</keyword>
<keyword id="KW-0853">WD repeat</keyword>
<reference key="1">
    <citation type="journal article" date="2000" name="DNA Res.">
        <title>Structural analysis of Arabidopsis thaliana chromosome 3. I. Sequence features of the regions of 4,504,864 bp covered by sixty P1 and TAC clones.</title>
        <authorList>
            <person name="Sato S."/>
            <person name="Nakamura Y."/>
            <person name="Kaneko T."/>
            <person name="Katoh T."/>
            <person name="Asamizu E."/>
            <person name="Tabata S."/>
        </authorList>
    </citation>
    <scope>NUCLEOTIDE SEQUENCE [LARGE SCALE GENOMIC DNA]</scope>
    <source>
        <strain>cv. Columbia</strain>
    </source>
</reference>
<reference key="2">
    <citation type="journal article" date="2017" name="Plant J.">
        <title>Araport11: a complete reannotation of the Arabidopsis thaliana reference genome.</title>
        <authorList>
            <person name="Cheng C.Y."/>
            <person name="Krishnakumar V."/>
            <person name="Chan A.P."/>
            <person name="Thibaud-Nissen F."/>
            <person name="Schobel S."/>
            <person name="Town C.D."/>
        </authorList>
    </citation>
    <scope>GENOME REANNOTATION</scope>
    <source>
        <strain>cv. Columbia</strain>
    </source>
</reference>
<reference key="3">
    <citation type="journal article" date="2003" name="Science">
        <title>Empirical analysis of transcriptional activity in the Arabidopsis genome.</title>
        <authorList>
            <person name="Yamada K."/>
            <person name="Lim J."/>
            <person name="Dale J.M."/>
            <person name="Chen H."/>
            <person name="Shinn P."/>
            <person name="Palm C.J."/>
            <person name="Southwick A.M."/>
            <person name="Wu H.C."/>
            <person name="Kim C.J."/>
            <person name="Nguyen M."/>
            <person name="Pham P.K."/>
            <person name="Cheuk R.F."/>
            <person name="Karlin-Newmann G."/>
            <person name="Liu S.X."/>
            <person name="Lam B."/>
            <person name="Sakano H."/>
            <person name="Wu T."/>
            <person name="Yu G."/>
            <person name="Miranda M."/>
            <person name="Quach H.L."/>
            <person name="Tripp M."/>
            <person name="Chang C.H."/>
            <person name="Lee J.M."/>
            <person name="Toriumi M.J."/>
            <person name="Chan M.M."/>
            <person name="Tang C.C."/>
            <person name="Onodera C.S."/>
            <person name="Deng J.M."/>
            <person name="Akiyama K."/>
            <person name="Ansari Y."/>
            <person name="Arakawa T."/>
            <person name="Banh J."/>
            <person name="Banno F."/>
            <person name="Bowser L."/>
            <person name="Brooks S.Y."/>
            <person name="Carninci P."/>
            <person name="Chao Q."/>
            <person name="Choy N."/>
            <person name="Enju A."/>
            <person name="Goldsmith A.D."/>
            <person name="Gurjal M."/>
            <person name="Hansen N.F."/>
            <person name="Hayashizaki Y."/>
            <person name="Johnson-Hopson C."/>
            <person name="Hsuan V.W."/>
            <person name="Iida K."/>
            <person name="Karnes M."/>
            <person name="Khan S."/>
            <person name="Koesema E."/>
            <person name="Ishida J."/>
            <person name="Jiang P.X."/>
            <person name="Jones T."/>
            <person name="Kawai J."/>
            <person name="Kamiya A."/>
            <person name="Meyers C."/>
            <person name="Nakajima M."/>
            <person name="Narusaka M."/>
            <person name="Seki M."/>
            <person name="Sakurai T."/>
            <person name="Satou M."/>
            <person name="Tamse R."/>
            <person name="Vaysberg M."/>
            <person name="Wallender E.K."/>
            <person name="Wong C."/>
            <person name="Yamamura Y."/>
            <person name="Yuan S."/>
            <person name="Shinozaki K."/>
            <person name="Davis R.W."/>
            <person name="Theologis A."/>
            <person name="Ecker J.R."/>
        </authorList>
    </citation>
    <scope>NUCLEOTIDE SEQUENCE [LARGE SCALE MRNA] (ISOFORM 1)</scope>
    <source>
        <strain>cv. Columbia</strain>
    </source>
</reference>
<reference key="4">
    <citation type="submission" date="2006-07" db="EMBL/GenBank/DDBJ databases">
        <title>Large-scale analysis of RIKEN Arabidopsis full-length (RAFL) cDNAs.</title>
        <authorList>
            <person name="Totoki Y."/>
            <person name="Seki M."/>
            <person name="Ishida J."/>
            <person name="Nakajima M."/>
            <person name="Enju A."/>
            <person name="Kamiya A."/>
            <person name="Narusaka M."/>
            <person name="Shin-i T."/>
            <person name="Nakagawa M."/>
            <person name="Sakamoto N."/>
            <person name="Oishi K."/>
            <person name="Kohara Y."/>
            <person name="Kobayashi M."/>
            <person name="Toyoda A."/>
            <person name="Sakaki Y."/>
            <person name="Sakurai T."/>
            <person name="Iida K."/>
            <person name="Akiyama K."/>
            <person name="Satou M."/>
            <person name="Toyoda T."/>
            <person name="Konagaya A."/>
            <person name="Carninci P."/>
            <person name="Kawai J."/>
            <person name="Hayashizaki Y."/>
            <person name="Shinozaki K."/>
        </authorList>
    </citation>
    <scope>NUCLEOTIDE SEQUENCE [LARGE SCALE MRNA] OF 395-1135 (ISOFORM 1)</scope>
    <source>
        <strain>cv. Columbia</strain>
    </source>
</reference>
<reference key="5">
    <citation type="journal article" date="2009" name="DNA Res.">
        <title>Analysis of multiple occurrences of alternative splicing events in Arabidopsis thaliana using novel sequenced full-length cDNAs.</title>
        <authorList>
            <person name="Iida K."/>
            <person name="Fukami-Kobayashi K."/>
            <person name="Toyoda A."/>
            <person name="Sakaki Y."/>
            <person name="Kobayashi M."/>
            <person name="Seki M."/>
            <person name="Shinozaki K."/>
        </authorList>
    </citation>
    <scope>NUCLEOTIDE SEQUENCE [LARGE SCALE MRNA] OF 788-1135 (ISOFORM 1)</scope>
    <source>
        <strain>cv. Columbia</strain>
    </source>
</reference>
<reference key="6">
    <citation type="journal article" date="2006" name="Plant Cell">
        <title>Analysis of the transcription factor WUSCHEL and its functional homologue in Antirrhinum reveals a potential mechanism for their roles in meristem maintenance.</title>
        <authorList>
            <person name="Kieffer M."/>
            <person name="Stern Y."/>
            <person name="Cook H."/>
            <person name="Clerici E."/>
            <person name="Maulbetsch C."/>
            <person name="Laux T."/>
            <person name="Davies B."/>
        </authorList>
    </citation>
    <scope>INTERACTION WITH WUS</scope>
</reference>
<reference key="7">
    <citation type="journal article" date="2006" name="Science">
        <title>TOPLESS regulates apical embryonic fate in Arabidopsis.</title>
        <authorList>
            <person name="Long J.A."/>
            <person name="Ohno C."/>
            <person name="Smith Z.R."/>
            <person name="Meyerowitz E.M."/>
        </authorList>
    </citation>
    <scope>GENE FAMILY</scope>
    <scope>NOMENCLATURE</scope>
</reference>
<reference key="8">
    <citation type="journal article" date="2013" name="Plant Cell">
        <title>The TIE1 transcriptional repressor links TCP transcription factors with TOPLESS/TOPLESS-RELATED corepressors and modulates leaf development in Arabidopsis.</title>
        <authorList>
            <person name="Tao Q."/>
            <person name="Guo D."/>
            <person name="Wei B."/>
            <person name="Zhang F."/>
            <person name="Pang C."/>
            <person name="Jiang H."/>
            <person name="Zhang J."/>
            <person name="Wei T."/>
            <person name="Gu H."/>
            <person name="Qu L.J."/>
            <person name="Qin G."/>
        </authorList>
    </citation>
    <scope>INTERACTION WITH SPEAR3/TIE1</scope>
</reference>
<reference key="9">
    <citation type="journal article" date="2014" name="J. Genet. Genomics">
        <title>SPOROCYTELESS is a novel embryophyte-specific transcription repressor that interacts with TPL and TCP proteins in Arabidopsis.</title>
        <authorList>
            <person name="Chen G.H."/>
            <person name="Sun J.Y."/>
            <person name="Liu M."/>
            <person name="Liu J."/>
            <person name="Yang W.C."/>
        </authorList>
    </citation>
    <scope>INTERACTION WITH SPL</scope>
</reference>
<reference key="10">
    <citation type="journal article" date="2014" name="Plant Cell">
        <title>DELLAs function as coactivators of GAI-ASSOCIATED FACTOR1 in regulation of gibberellin homeostasis and signaling in Arabidopsis.</title>
        <authorList>
            <person name="Fukazawa J."/>
            <person name="Teramura H."/>
            <person name="Murakoshi S."/>
            <person name="Nasuno K."/>
            <person name="Nishida N."/>
            <person name="Ito T."/>
            <person name="Yoshida M."/>
            <person name="Kamiya Y."/>
            <person name="Yamaguchi S."/>
            <person name="Takahashi Y."/>
        </authorList>
    </citation>
    <scope>FUNCTION</scope>
    <scope>INTERACTION WITH GAF1/IDD2</scope>
    <scope>SUBCELLULAR LOCATION</scope>
    <source>
        <strain>cv. Columbia</strain>
    </source>
</reference>
<reference key="11">
    <citation type="journal article" date="2015" name="Cell Res.">
        <title>The molecular mechanism of sporocyteless/nozzle in controlling Arabidopsis ovule development.</title>
        <authorList>
            <person name="Wei B."/>
            <person name="Zhang J."/>
            <person name="Pang C."/>
            <person name="Yu H."/>
            <person name="Guo D."/>
            <person name="Jiang H."/>
            <person name="Ding M."/>
            <person name="Chen Z."/>
            <person name="Tao Q."/>
            <person name="Gu H."/>
            <person name="Qu L.J."/>
            <person name="Qin G."/>
        </authorList>
    </citation>
    <scope>INTERACTION WITH SPL</scope>
</reference>
<reference key="12">
    <citation type="journal article" date="2015" name="Sci. Adv.">
        <title>Structural basis for recognition of diverse transcriptional repressors by the TOPLESS family of corepressors.</title>
        <authorList>
            <person name="Ke J."/>
            <person name="Ma H."/>
            <person name="Gu X."/>
            <person name="Thelen A."/>
            <person name="Brunzelle J.S."/>
            <person name="Li J."/>
            <person name="Xu H.E."/>
            <person name="Melcher K."/>
        </authorList>
    </citation>
    <scope>SUBUNIT</scope>
    <scope>DOMAIN</scope>
</reference>
<accession>Q27GK7</accession>
<accession>B9DHS5</accession>
<accession>Q0WMG2</accession>
<accession>Q3EB60</accession>
<accession>Q9LVZ2</accession>
<evidence type="ECO:0000250" key="1">
    <source>
        <dbReference type="UniProtKB" id="Q94AI7"/>
    </source>
</evidence>
<evidence type="ECO:0000255" key="2">
    <source>
        <dbReference type="PROSITE-ProRule" id="PRU00058"/>
    </source>
</evidence>
<evidence type="ECO:0000255" key="3">
    <source>
        <dbReference type="PROSITE-ProRule" id="PRU00126"/>
    </source>
</evidence>
<evidence type="ECO:0000256" key="4">
    <source>
        <dbReference type="SAM" id="MobiDB-lite"/>
    </source>
</evidence>
<evidence type="ECO:0000269" key="5">
    <source>
    </source>
</evidence>
<evidence type="ECO:0000269" key="6">
    <source>
    </source>
</evidence>
<evidence type="ECO:0000269" key="7">
    <source>
    </source>
</evidence>
<evidence type="ECO:0000269" key="8">
    <source>
    </source>
</evidence>
<evidence type="ECO:0000269" key="9">
    <source>
    </source>
</evidence>
<evidence type="ECO:0000269" key="10">
    <source>
    </source>
</evidence>
<evidence type="ECO:0000305" key="11"/>
<proteinExistence type="evidence at protein level"/>
<feature type="chain" id="PRO_0000394735" description="Topless-related protein 4">
    <location>
        <begin position="1"/>
        <end position="1135"/>
    </location>
</feature>
<feature type="domain" description="LisH" evidence="3">
    <location>
        <begin position="4"/>
        <end position="36"/>
    </location>
</feature>
<feature type="domain" description="CTLH" evidence="2">
    <location>
        <begin position="34"/>
        <end position="92"/>
    </location>
</feature>
<feature type="repeat" description="WD 1">
    <location>
        <begin position="355"/>
        <end position="395"/>
    </location>
</feature>
<feature type="repeat" description="WD 2">
    <location>
        <begin position="417"/>
        <end position="456"/>
    </location>
</feature>
<feature type="repeat" description="WD 3">
    <location>
        <begin position="462"/>
        <end position="503"/>
    </location>
</feature>
<feature type="repeat" description="WD 4">
    <location>
        <begin position="506"/>
        <end position="547"/>
    </location>
</feature>
<feature type="repeat" description="WD 5">
    <location>
        <begin position="550"/>
        <end position="593"/>
    </location>
</feature>
<feature type="repeat" description="WD 6">
    <location>
        <begin position="597"/>
        <end position="636"/>
    </location>
</feature>
<feature type="repeat" description="WD 7">
    <location>
        <begin position="638"/>
        <end position="680"/>
    </location>
</feature>
<feature type="repeat" description="WD 8">
    <location>
        <begin position="776"/>
        <end position="815"/>
    </location>
</feature>
<feature type="repeat" description="WD 9">
    <location>
        <begin position="843"/>
        <end position="881"/>
    </location>
</feature>
<feature type="repeat" description="WD 10">
    <location>
        <begin position="884"/>
        <end position="924"/>
    </location>
</feature>
<feature type="repeat" description="WD 11">
    <location>
        <begin position="927"/>
        <end position="966"/>
    </location>
</feature>
<feature type="repeat" description="WD 12">
    <location>
        <begin position="1020"/>
        <end position="1059"/>
    </location>
</feature>
<feature type="region of interest" description="Disordered" evidence="4">
    <location>
        <begin position="281"/>
        <end position="303"/>
    </location>
</feature>
<feature type="region of interest" description="Disordered" evidence="4">
    <location>
        <begin position="1095"/>
        <end position="1135"/>
    </location>
</feature>
<feature type="compositionally biased region" description="Polar residues" evidence="4">
    <location>
        <begin position="290"/>
        <end position="303"/>
    </location>
</feature>
<feature type="compositionally biased region" description="Low complexity" evidence="4">
    <location>
        <begin position="1119"/>
        <end position="1135"/>
    </location>
</feature>
<feature type="modified residue" description="Phosphoserine" evidence="1">
    <location>
        <position position="214"/>
    </location>
</feature>
<feature type="splice variant" id="VSP_039296" description="In isoform 2." evidence="11">
    <original>R</original>
    <variation>SDS</variation>
    <location>
        <position position="1135"/>
    </location>
</feature>
<sequence length="1135" mass="124104">MSSLSRELVFLILQFLDEEKFKDTVHRLEKESGFFFNMRYFEDSVTAGEWDDVEKYLSGFTKVDDNRYSMKIFFEIRKQKYLEALDKKDHAKAVDILVKELKVFSTFNEELFKEITMLLTLTNFRENEQLSKYGDTKSARGIMLGELKKLIEANPLFRDKLQFPSLKNSRLRTLINQSLNWQHQLCKNPRPNPDIKTLFVDHTCGHPNGAHTPSPTTNHLMGSVPKVGGFPPLGAHGPFQPTPAPLTTSLAGWMPNPSVQHPTVSAGPIGLGAPNSAVSMLKRERPRSPPTNSLSMDYQTADSESVLKRPRPFGISDGVNNLPVNVLPVTYPGQSHAHATYSTDDLPKNVSRILSQGSAIKSMDFHPVQQTMLLVGTNLGDIAIWEVGSREKLVSRSFKVWDLATCTVNLQASLASEYTAAVNRVVWSPDGGLLGVAYSKHIVHIYSYHGGEDLRNHLEIDAHAGNVNDLAFSQPNQQLCVVTCGEDKTIKVWDAVTGNKLHTFEGHEAPVYSVCPHQKENIQFIFSTAVDGKIKAWLYDNMGSRVDYDAPGRSCTSMAYCADGTRLFSCGTSKEGESFIVEWNESEGAVKRTYLGLGKRSVGVVQFDTMKNKFLVAGDEFQVKFWDMDSVDLLSSTAAEGGLPSSPCLRINKEGTLLAVSTTDNGIKILANAEGSRILHSMANRGLDSSRAPPGSVAKGPIVGTFGTPNSSTGMSLSMGERSGPVASVTGLNGDNRSLPDVKPRIADDAEKSKTWKLTEISERSQLRTLRLPDTLLPARVVKLIYTNSGGAILALAENAAHKLWKWQKSERNLLGKANSNVPPQLWQPSSGVLMTNDTREGNKEDVVPCFALSKNDSYVMSASGGKISLFNMMTFKTMTTFMAPPPAATSLAFHPQDNNIIAIGMDDSSIQIYNVRVDEVKSKLKGHQKRVTGLAFSNVLNVLVSSGADSQLCVWSMDGWEKQASKQIQIPSGHSPNPLAHTRVQFHQDQIHVLVVHASQLAIYEAPKLENMKQWIPKESSGSVTDAVYSCDSQSIYAAFDDGSVSILTATTLQLKCRIGPNSYLPSNPSSRVYPATVAAHPSEPNQFAVGLTDGGVHVIEPPGPEGKWGISAPPENGAGPSVSSAPGSDQQPR</sequence>
<gene>
    <name type="primary">TPR4</name>
    <name type="synonym">WSIP2</name>
    <name type="ordered locus">At3g15880</name>
    <name type="ORF">MSJ11.27</name>
</gene>
<comment type="function">
    <text evidence="7">Transcription corepressor of Zinc finger transcription factors GAF1/IDD2 and ENY/IDD1 in regulation of gibberellin homeostasis and signaling.</text>
</comment>
<comment type="subunit">
    <text evidence="5 6 7 8 9 10">Tetramer (PubMed:26601214). Interacts with WUS (via the C-terminal domain) (PubMed:16461579). Interacts with SPL (via EAR motif) (PubMed:25378179, PubMed:25527103). Interacts with SPEAR3/TIE1 (PubMed:23444332). Binds to and corepresses GAF1/IDD2 at the promoter of GA20OX2 gene (PubMed:25035403).</text>
</comment>
<comment type="subcellular location">
    <subcellularLocation>
        <location evidence="7">Nucleus</location>
    </subcellularLocation>
</comment>
<comment type="alternative products">
    <event type="alternative splicing"/>
    <isoform>
        <id>Q27GK7-1</id>
        <name>1</name>
        <sequence type="displayed"/>
    </isoform>
    <isoform>
        <id>Q27GK7-2</id>
        <name>2</name>
        <sequence type="described" ref="VSP_039296"/>
    </isoform>
</comment>
<comment type="domain">
    <text evidence="10">The N-terminal TOPLESS domain (TPD) (1-209) binds directly to a 12-amino acid LxLxL EAR motif peptide.</text>
</comment>
<comment type="sequence caution" evidence="11">
    <conflict type="frameshift">
        <sequence resource="EMBL" id="AY039963"/>
    </conflict>
</comment>
<comment type="sequence caution" evidence="11">
    <conflict type="erroneous gene model prediction">
        <sequence resource="EMBL-CDS" id="BAB02318"/>
    </conflict>
</comment>
<name>TPR4_ARATH</name>
<protein>
    <recommendedName>
        <fullName>Topless-related protein 4</fullName>
    </recommendedName>
    <alternativeName>
        <fullName>WUS-interacting protein 2</fullName>
    </alternativeName>
</protein>
<dbReference type="EMBL" id="AB017071">
    <property type="protein sequence ID" value="BAB02318.1"/>
    <property type="status" value="ALT_SEQ"/>
    <property type="molecule type" value="Genomic_DNA"/>
</dbReference>
<dbReference type="EMBL" id="CP002686">
    <property type="protein sequence ID" value="AEE75740.1"/>
    <property type="molecule type" value="Genomic_DNA"/>
</dbReference>
<dbReference type="EMBL" id="CP002686">
    <property type="protein sequence ID" value="AEE75741.1"/>
    <property type="molecule type" value="Genomic_DNA"/>
</dbReference>
<dbReference type="EMBL" id="CP002686">
    <property type="protein sequence ID" value="ANM63812.1"/>
    <property type="molecule type" value="Genomic_DNA"/>
</dbReference>
<dbReference type="EMBL" id="AY039963">
    <property type="status" value="NOT_ANNOTATED_CDS"/>
    <property type="molecule type" value="mRNA"/>
</dbReference>
<dbReference type="EMBL" id="AK229865">
    <property type="protein sequence ID" value="BAF01694.1"/>
    <property type="molecule type" value="mRNA"/>
</dbReference>
<dbReference type="EMBL" id="AK317630">
    <property type="protein sequence ID" value="BAH20292.1"/>
    <property type="molecule type" value="mRNA"/>
</dbReference>
<dbReference type="RefSeq" id="NP_001325883.1">
    <molecule id="Q27GK7-1"/>
    <property type="nucleotide sequence ID" value="NM_001338190.1"/>
</dbReference>
<dbReference type="RefSeq" id="NP_188209.3">
    <molecule id="Q27GK7-2"/>
    <property type="nucleotide sequence ID" value="NM_112458.5"/>
</dbReference>
<dbReference type="RefSeq" id="NP_851003.2">
    <molecule id="Q27GK7-1"/>
    <property type="nucleotide sequence ID" value="NM_180672.4"/>
</dbReference>
<dbReference type="BioGRID" id="6165">
    <property type="interactions" value="36"/>
</dbReference>
<dbReference type="FunCoup" id="Q27GK7">
    <property type="interactions" value="1131"/>
</dbReference>
<dbReference type="IntAct" id="Q27GK7">
    <property type="interactions" value="1"/>
</dbReference>
<dbReference type="STRING" id="3702.Q27GK7"/>
<dbReference type="GlyGen" id="Q27GK7">
    <property type="glycosylation" value="3 sites, 1 O-linked glycan (2 sites)"/>
</dbReference>
<dbReference type="iPTMnet" id="Q27GK7"/>
<dbReference type="PaxDb" id="3702-AT3G15880.2"/>
<dbReference type="ProteomicsDB" id="228323">
    <molecule id="Q27GK7-1"/>
</dbReference>
<dbReference type="EnsemblPlants" id="AT3G15880.1">
    <molecule id="Q27GK7-1"/>
    <property type="protein sequence ID" value="AT3G15880.1"/>
    <property type="gene ID" value="AT3G15880"/>
</dbReference>
<dbReference type="EnsemblPlants" id="AT3G15880.2">
    <molecule id="Q27GK7-2"/>
    <property type="protein sequence ID" value="AT3G15880.2"/>
    <property type="gene ID" value="AT3G15880"/>
</dbReference>
<dbReference type="EnsemblPlants" id="AT3G15880.4">
    <molecule id="Q27GK7-1"/>
    <property type="protein sequence ID" value="AT3G15880.4"/>
    <property type="gene ID" value="AT3G15880"/>
</dbReference>
<dbReference type="GeneID" id="820831"/>
<dbReference type="Gramene" id="AT3G15880.1">
    <molecule id="Q27GK7-1"/>
    <property type="protein sequence ID" value="AT3G15880.1"/>
    <property type="gene ID" value="AT3G15880"/>
</dbReference>
<dbReference type="Gramene" id="AT3G15880.2">
    <molecule id="Q27GK7-2"/>
    <property type="protein sequence ID" value="AT3G15880.2"/>
    <property type="gene ID" value="AT3G15880"/>
</dbReference>
<dbReference type="Gramene" id="AT3G15880.4">
    <molecule id="Q27GK7-1"/>
    <property type="protein sequence ID" value="AT3G15880.4"/>
    <property type="gene ID" value="AT3G15880"/>
</dbReference>
<dbReference type="KEGG" id="ath:AT3G15880"/>
<dbReference type="Araport" id="AT3G15880"/>
<dbReference type="TAIR" id="AT3G15880">
    <property type="gene designation" value="WSIP2"/>
</dbReference>
<dbReference type="eggNOG" id="KOG0266">
    <property type="taxonomic scope" value="Eukaryota"/>
</dbReference>
<dbReference type="HOGENOM" id="CLU_003103_1_0_1"/>
<dbReference type="InParanoid" id="Q27GK7"/>
<dbReference type="OMA" id="LTEMNEP"/>
<dbReference type="PhylomeDB" id="Q27GK7"/>
<dbReference type="PRO" id="PR:Q27GK7"/>
<dbReference type="Proteomes" id="UP000006548">
    <property type="component" value="Chromosome 3"/>
</dbReference>
<dbReference type="ExpressionAtlas" id="Q27GK7">
    <property type="expression patterns" value="baseline and differential"/>
</dbReference>
<dbReference type="GO" id="GO:0005634">
    <property type="term" value="C:nucleus"/>
    <property type="evidence" value="ECO:0000314"/>
    <property type="project" value="UniProtKB"/>
</dbReference>
<dbReference type="GO" id="GO:0003714">
    <property type="term" value="F:transcription corepressor activity"/>
    <property type="evidence" value="ECO:0000314"/>
    <property type="project" value="UniProtKB"/>
</dbReference>
<dbReference type="GO" id="GO:0010336">
    <property type="term" value="P:gibberellic acid homeostasis"/>
    <property type="evidence" value="ECO:0000314"/>
    <property type="project" value="UniProtKB"/>
</dbReference>
<dbReference type="GO" id="GO:0009938">
    <property type="term" value="P:negative regulation of gibberellic acid mediated signaling pathway"/>
    <property type="evidence" value="ECO:0000314"/>
    <property type="project" value="UniProtKB"/>
</dbReference>
<dbReference type="GO" id="GO:0000122">
    <property type="term" value="P:negative regulation of transcription by RNA polymerase II"/>
    <property type="evidence" value="ECO:0000314"/>
    <property type="project" value="UniProtKB"/>
</dbReference>
<dbReference type="GO" id="GO:0010072">
    <property type="term" value="P:primary shoot apical meristem specification"/>
    <property type="evidence" value="ECO:0000316"/>
    <property type="project" value="TAIR"/>
</dbReference>
<dbReference type="FunFam" id="2.130.10.10:FF:000558">
    <property type="entry name" value="Topless-related protein 1"/>
    <property type="match status" value="1"/>
</dbReference>
<dbReference type="FunFam" id="2.130.10.10:FF:000479">
    <property type="entry name" value="Topless-related protein 3"/>
    <property type="match status" value="1"/>
</dbReference>
<dbReference type="Gene3D" id="2.130.10.10">
    <property type="entry name" value="YVTN repeat-like/Quinoprotein amine dehydrogenase"/>
    <property type="match status" value="4"/>
</dbReference>
<dbReference type="InterPro" id="IPR006595">
    <property type="entry name" value="CTLH_C"/>
</dbReference>
<dbReference type="InterPro" id="IPR006594">
    <property type="entry name" value="LisH"/>
</dbReference>
<dbReference type="InterPro" id="IPR027728">
    <property type="entry name" value="Topless_fam"/>
</dbReference>
<dbReference type="InterPro" id="IPR048419">
    <property type="entry name" value="Topless_Znf"/>
</dbReference>
<dbReference type="InterPro" id="IPR054532">
    <property type="entry name" value="TPL_SMU1_LisH-like"/>
</dbReference>
<dbReference type="InterPro" id="IPR054080">
    <property type="entry name" value="TPR1-like_2nd"/>
</dbReference>
<dbReference type="InterPro" id="IPR015943">
    <property type="entry name" value="WD40/YVTN_repeat-like_dom_sf"/>
</dbReference>
<dbReference type="InterPro" id="IPR036322">
    <property type="entry name" value="WD40_repeat_dom_sf"/>
</dbReference>
<dbReference type="InterPro" id="IPR001680">
    <property type="entry name" value="WD40_rpt"/>
</dbReference>
<dbReference type="PANTHER" id="PTHR44083">
    <property type="entry name" value="TOPLESS-RELATED PROTEIN 1-RELATED"/>
    <property type="match status" value="1"/>
</dbReference>
<dbReference type="PANTHER" id="PTHR44083:SF48">
    <property type="entry name" value="TOPLESS-RELATED PROTEIN 4"/>
    <property type="match status" value="1"/>
</dbReference>
<dbReference type="Pfam" id="PF17814">
    <property type="entry name" value="LisH_TPL"/>
    <property type="match status" value="1"/>
</dbReference>
<dbReference type="Pfam" id="PF21889">
    <property type="entry name" value="TPR1-like_2nd"/>
    <property type="match status" value="1"/>
</dbReference>
<dbReference type="Pfam" id="PF00400">
    <property type="entry name" value="WD40"/>
    <property type="match status" value="3"/>
</dbReference>
<dbReference type="Pfam" id="PF21359">
    <property type="entry name" value="zf_topless"/>
    <property type="match status" value="1"/>
</dbReference>
<dbReference type="SMART" id="SM00668">
    <property type="entry name" value="CTLH"/>
    <property type="match status" value="1"/>
</dbReference>
<dbReference type="SMART" id="SM00667">
    <property type="entry name" value="LisH"/>
    <property type="match status" value="1"/>
</dbReference>
<dbReference type="SMART" id="SM00320">
    <property type="entry name" value="WD40"/>
    <property type="match status" value="11"/>
</dbReference>
<dbReference type="SUPFAM" id="SSF50978">
    <property type="entry name" value="WD40 repeat-like"/>
    <property type="match status" value="2"/>
</dbReference>
<dbReference type="PROSITE" id="PS50897">
    <property type="entry name" value="CTLH"/>
    <property type="match status" value="1"/>
</dbReference>
<dbReference type="PROSITE" id="PS50896">
    <property type="entry name" value="LISH"/>
    <property type="match status" value="1"/>
</dbReference>
<dbReference type="PROSITE" id="PS00678">
    <property type="entry name" value="WD_REPEATS_1"/>
    <property type="match status" value="1"/>
</dbReference>
<dbReference type="PROSITE" id="PS50082">
    <property type="entry name" value="WD_REPEATS_2"/>
    <property type="match status" value="2"/>
</dbReference>
<dbReference type="PROSITE" id="PS50294">
    <property type="entry name" value="WD_REPEATS_REGION"/>
    <property type="match status" value="2"/>
</dbReference>